<protein>
    <recommendedName>
        <fullName>Putative ABC transporter periplasmic binding protein BHWA1_00430</fullName>
    </recommendedName>
    <alternativeName>
        <fullName>P-H7</fullName>
    </alternativeName>
</protein>
<accession>C0QY54</accession>
<accession>C4MGF0</accession>
<keyword id="KW-1003">Cell membrane</keyword>
<keyword id="KW-0449">Lipoprotein</keyword>
<keyword id="KW-0472">Membrane</keyword>
<keyword id="KW-0564">Palmitate</keyword>
<keyword id="KW-0732">Signal</keyword>
<organism>
    <name type="scientific">Brachyspira hyodysenteriae (strain ATCC 49526 / WA1)</name>
    <dbReference type="NCBI Taxonomy" id="565034"/>
    <lineage>
        <taxon>Bacteria</taxon>
        <taxon>Pseudomonadati</taxon>
        <taxon>Spirochaetota</taxon>
        <taxon>Spirochaetia</taxon>
        <taxon>Brachyspirales</taxon>
        <taxon>Brachyspiraceae</taxon>
        <taxon>Brachyspira</taxon>
    </lineage>
</organism>
<name>Y0430_BRAHW</name>
<evidence type="ECO:0000255" key="1">
    <source>
        <dbReference type="PROSITE-ProRule" id="PRU00303"/>
    </source>
</evidence>
<evidence type="ECO:0000269" key="2">
    <source>
    </source>
</evidence>
<evidence type="ECO:0000305" key="3"/>
<reference key="1">
    <citation type="journal article" date="2009" name="Vet. Microbiol.">
        <title>A reverse vaccinology approach to swine dysentery vaccine development.</title>
        <authorList>
            <person name="Song Y."/>
            <person name="La T."/>
            <person name="Phillips N.D."/>
            <person name="Bellgard M.I."/>
            <person name="Hampson D.J."/>
        </authorList>
    </citation>
    <scope>NUCLEOTIDE SEQUENCE [GENOMIC DNA]</scope>
    <scope>BIOTECHNOLOGY</scope>
</reference>
<reference key="2">
    <citation type="journal article" date="2009" name="PLoS ONE">
        <title>Genome sequence of the pathogenic intestinal spirochete Brachyspira hyodysenteriae reveals adaptations to its lifestyle in the porcine large intestine.</title>
        <authorList>
            <person name="Bellgard M.I."/>
            <person name="Wanchanthuek P."/>
            <person name="La T."/>
            <person name="Ryan K."/>
            <person name="Moolhuijzen P."/>
            <person name="Albertyn Z."/>
            <person name="Shaban B."/>
            <person name="Motro Y."/>
            <person name="Dunn D.S."/>
            <person name="Schibeci D."/>
            <person name="Hunter A."/>
            <person name="Barrero R."/>
            <person name="Phillips N.D."/>
            <person name="Hampson D.J."/>
        </authorList>
    </citation>
    <scope>NUCLEOTIDE SEQUENCE [LARGE SCALE GENOMIC DNA]</scope>
    <source>
        <strain>ATCC 49526 / WA1</strain>
    </source>
</reference>
<comment type="function">
    <text>Probably part of an ABC transporter complex.</text>
</comment>
<comment type="subcellular location">
    <subcellularLocation>
        <location evidence="1">Cell membrane</location>
        <topology evidence="1">Lipid-anchor</topology>
    </subcellularLocation>
</comment>
<comment type="biotechnology">
    <text evidence="2">Has shown promise in a 4-component vaccine with SecA (AC C0QZS7), BHWA1_00569 (AC C0QYX7) and FlaAL (AC C0QWY9).</text>
</comment>
<comment type="similarity">
    <text evidence="3">Belongs to the bacterial solute-binding protein SsuA/TauA family.</text>
</comment>
<gene>
    <name type="primary">ssuA</name>
    <name type="ordered locus">BHWA1_00430</name>
</gene>
<dbReference type="EMBL" id="EU555154">
    <property type="protein sequence ID" value="ACD74824.1"/>
    <property type="molecule type" value="Genomic_DNA"/>
</dbReference>
<dbReference type="EMBL" id="CP001357">
    <property type="protein sequence ID" value="ACN82926.1"/>
    <property type="molecule type" value="Genomic_DNA"/>
</dbReference>
<dbReference type="RefSeq" id="WP_012669978.1">
    <property type="nucleotide sequence ID" value="NC_012225.1"/>
</dbReference>
<dbReference type="SMR" id="C0QY54"/>
<dbReference type="STRING" id="565034.BHWA1_00430"/>
<dbReference type="GeneID" id="63961517"/>
<dbReference type="KEGG" id="bhy:BHWA1_00430"/>
<dbReference type="eggNOG" id="COG0715">
    <property type="taxonomic scope" value="Bacteria"/>
</dbReference>
<dbReference type="HOGENOM" id="CLU_060267_0_0_12"/>
<dbReference type="Proteomes" id="UP000001803">
    <property type="component" value="Chromosome"/>
</dbReference>
<dbReference type="GO" id="GO:0005886">
    <property type="term" value="C:plasma membrane"/>
    <property type="evidence" value="ECO:0007669"/>
    <property type="project" value="UniProtKB-SubCell"/>
</dbReference>
<dbReference type="Gene3D" id="3.40.190.10">
    <property type="entry name" value="Periplasmic binding protein-like II"/>
    <property type="match status" value="2"/>
</dbReference>
<dbReference type="InterPro" id="IPR001638">
    <property type="entry name" value="Solute-binding_3/MltF_N"/>
</dbReference>
<dbReference type="PANTHER" id="PTHR30024">
    <property type="entry name" value="ALIPHATIC SULFONATES-BINDING PROTEIN-RELATED"/>
    <property type="match status" value="1"/>
</dbReference>
<dbReference type="PANTHER" id="PTHR30024:SF47">
    <property type="entry name" value="TAURINE-BINDING PERIPLASMIC PROTEIN"/>
    <property type="match status" value="1"/>
</dbReference>
<dbReference type="Pfam" id="PF13379">
    <property type="entry name" value="NMT1_2"/>
    <property type="match status" value="1"/>
</dbReference>
<dbReference type="SMART" id="SM00062">
    <property type="entry name" value="PBPb"/>
    <property type="match status" value="1"/>
</dbReference>
<dbReference type="SUPFAM" id="SSF53850">
    <property type="entry name" value="Periplasmic binding protein-like II"/>
    <property type="match status" value="1"/>
</dbReference>
<dbReference type="PROSITE" id="PS51257">
    <property type="entry name" value="PROKAR_LIPOPROTEIN"/>
    <property type="match status" value="1"/>
</dbReference>
<sequence length="346" mass="37347">MRKTVKIITSLVLIACLFLLASCANKGSSSSGDATTLKVAVMPFLNSVPIEYMINNKLDEKYGFKIETVYFPSGGPMNEALGAGLWEVGTLSAASVYSLANYNAHVVADIGHSEGGIEVLVNPDSDILTVKGVNKDFPEVYGDAATLKGKTIAVPTGTISHLNVIHWLRAINVDPNTVNIVHMEFPQAYQALKAKKIDAAALNPPTSFSAEADGMKIVSSLTTLNIPQYDSIIVSDEAFNNKKDTIVLYIKAFLEACDALQADPNMAAQELLNWYTKNGSTSTLEACQSEVQTRPFVTTEEIKNIKTGDSVRITADFFASQSLITEDKLTVVDQNVDTELLGKALN</sequence>
<proteinExistence type="evidence at protein level"/>
<feature type="signal peptide" evidence="1">
    <location>
        <begin position="1"/>
        <end position="22"/>
    </location>
</feature>
<feature type="chain" id="PRO_0000380707" description="Putative ABC transporter periplasmic binding protein BHWA1_00430">
    <location>
        <begin position="23"/>
        <end position="346"/>
    </location>
</feature>
<feature type="lipid moiety-binding region" description="N-palmitoyl cysteine" evidence="1">
    <location>
        <position position="23"/>
    </location>
</feature>
<feature type="lipid moiety-binding region" description="S-diacylglycerol cysteine" evidence="1">
    <location>
        <position position="23"/>
    </location>
</feature>
<feature type="sequence conflict" description="In Ref. 1; ACD74824." evidence="3" ref="1">
    <original>A</original>
    <variation>S</variation>
    <location>
        <position position="153"/>
    </location>
</feature>